<dbReference type="EMBL" id="AM999887">
    <property type="protein sequence ID" value="CAQ55228.1"/>
    <property type="molecule type" value="Genomic_DNA"/>
</dbReference>
<dbReference type="RefSeq" id="WP_012481994.1">
    <property type="nucleotide sequence ID" value="NC_010981.1"/>
</dbReference>
<dbReference type="SMR" id="B3CMV5"/>
<dbReference type="KEGG" id="wpi:WP1120"/>
<dbReference type="eggNOG" id="COG0322">
    <property type="taxonomic scope" value="Bacteria"/>
</dbReference>
<dbReference type="HOGENOM" id="CLU_014841_3_0_5"/>
<dbReference type="Proteomes" id="UP000008814">
    <property type="component" value="Chromosome"/>
</dbReference>
<dbReference type="GO" id="GO:0005737">
    <property type="term" value="C:cytoplasm"/>
    <property type="evidence" value="ECO:0007669"/>
    <property type="project" value="UniProtKB-SubCell"/>
</dbReference>
<dbReference type="GO" id="GO:0009380">
    <property type="term" value="C:excinuclease repair complex"/>
    <property type="evidence" value="ECO:0007669"/>
    <property type="project" value="InterPro"/>
</dbReference>
<dbReference type="GO" id="GO:0003677">
    <property type="term" value="F:DNA binding"/>
    <property type="evidence" value="ECO:0007669"/>
    <property type="project" value="UniProtKB-UniRule"/>
</dbReference>
<dbReference type="GO" id="GO:0009381">
    <property type="term" value="F:excinuclease ABC activity"/>
    <property type="evidence" value="ECO:0007669"/>
    <property type="project" value="UniProtKB-UniRule"/>
</dbReference>
<dbReference type="GO" id="GO:0006289">
    <property type="term" value="P:nucleotide-excision repair"/>
    <property type="evidence" value="ECO:0007669"/>
    <property type="project" value="UniProtKB-UniRule"/>
</dbReference>
<dbReference type="GO" id="GO:0009432">
    <property type="term" value="P:SOS response"/>
    <property type="evidence" value="ECO:0007669"/>
    <property type="project" value="UniProtKB-UniRule"/>
</dbReference>
<dbReference type="CDD" id="cd10434">
    <property type="entry name" value="GIY-YIG_UvrC_Cho"/>
    <property type="match status" value="1"/>
</dbReference>
<dbReference type="FunFam" id="3.40.1440.10:FF:000001">
    <property type="entry name" value="UvrABC system protein C"/>
    <property type="match status" value="1"/>
</dbReference>
<dbReference type="Gene3D" id="1.10.150.20">
    <property type="entry name" value="5' to 3' exonuclease, C-terminal subdomain"/>
    <property type="match status" value="1"/>
</dbReference>
<dbReference type="Gene3D" id="3.40.1440.10">
    <property type="entry name" value="GIY-YIG endonuclease"/>
    <property type="match status" value="1"/>
</dbReference>
<dbReference type="Gene3D" id="3.30.420.340">
    <property type="entry name" value="UvrC, RNAse H endonuclease domain"/>
    <property type="match status" value="1"/>
</dbReference>
<dbReference type="HAMAP" id="MF_00203">
    <property type="entry name" value="UvrC"/>
    <property type="match status" value="1"/>
</dbReference>
<dbReference type="InterPro" id="IPR000305">
    <property type="entry name" value="GIY-YIG_endonuc"/>
</dbReference>
<dbReference type="InterPro" id="IPR035901">
    <property type="entry name" value="GIY-YIG_endonuc_sf"/>
</dbReference>
<dbReference type="InterPro" id="IPR047296">
    <property type="entry name" value="GIY-YIG_UvrC_Cho"/>
</dbReference>
<dbReference type="InterPro" id="IPR010994">
    <property type="entry name" value="RuvA_2-like"/>
</dbReference>
<dbReference type="InterPro" id="IPR001943">
    <property type="entry name" value="UVR_dom"/>
</dbReference>
<dbReference type="InterPro" id="IPR036876">
    <property type="entry name" value="UVR_dom_sf"/>
</dbReference>
<dbReference type="InterPro" id="IPR050066">
    <property type="entry name" value="UvrABC_protein_C"/>
</dbReference>
<dbReference type="InterPro" id="IPR004791">
    <property type="entry name" value="UvrC"/>
</dbReference>
<dbReference type="InterPro" id="IPR001162">
    <property type="entry name" value="UvrC_RNase_H_dom"/>
</dbReference>
<dbReference type="InterPro" id="IPR038476">
    <property type="entry name" value="UvrC_RNase_H_dom_sf"/>
</dbReference>
<dbReference type="NCBIfam" id="TIGR00194">
    <property type="entry name" value="uvrC"/>
    <property type="match status" value="1"/>
</dbReference>
<dbReference type="PANTHER" id="PTHR30562:SF1">
    <property type="entry name" value="UVRABC SYSTEM PROTEIN C"/>
    <property type="match status" value="1"/>
</dbReference>
<dbReference type="PANTHER" id="PTHR30562">
    <property type="entry name" value="UVRC/OXIDOREDUCTASE"/>
    <property type="match status" value="1"/>
</dbReference>
<dbReference type="Pfam" id="PF01541">
    <property type="entry name" value="GIY-YIG"/>
    <property type="match status" value="1"/>
</dbReference>
<dbReference type="Pfam" id="PF14520">
    <property type="entry name" value="HHH_5"/>
    <property type="match status" value="1"/>
</dbReference>
<dbReference type="Pfam" id="PF02151">
    <property type="entry name" value="UVR"/>
    <property type="match status" value="1"/>
</dbReference>
<dbReference type="Pfam" id="PF22920">
    <property type="entry name" value="UvrC_RNaseH"/>
    <property type="match status" value="1"/>
</dbReference>
<dbReference type="Pfam" id="PF08459">
    <property type="entry name" value="UvrC_RNaseH_dom"/>
    <property type="match status" value="1"/>
</dbReference>
<dbReference type="SMART" id="SM00465">
    <property type="entry name" value="GIYc"/>
    <property type="match status" value="1"/>
</dbReference>
<dbReference type="SUPFAM" id="SSF46600">
    <property type="entry name" value="C-terminal UvrC-binding domain of UvrB"/>
    <property type="match status" value="1"/>
</dbReference>
<dbReference type="SUPFAM" id="SSF82771">
    <property type="entry name" value="GIY-YIG endonuclease"/>
    <property type="match status" value="1"/>
</dbReference>
<dbReference type="SUPFAM" id="SSF47781">
    <property type="entry name" value="RuvA domain 2-like"/>
    <property type="match status" value="1"/>
</dbReference>
<dbReference type="PROSITE" id="PS50164">
    <property type="entry name" value="GIY_YIG"/>
    <property type="match status" value="1"/>
</dbReference>
<dbReference type="PROSITE" id="PS50151">
    <property type="entry name" value="UVR"/>
    <property type="match status" value="1"/>
</dbReference>
<dbReference type="PROSITE" id="PS50165">
    <property type="entry name" value="UVRC"/>
    <property type="match status" value="1"/>
</dbReference>
<protein>
    <recommendedName>
        <fullName evidence="1">UvrABC system protein C</fullName>
        <shortName evidence="1">Protein UvrC</shortName>
    </recommendedName>
    <alternativeName>
        <fullName evidence="1">Excinuclease ABC subunit C</fullName>
    </alternativeName>
</protein>
<gene>
    <name evidence="1" type="primary">uvrC</name>
    <name type="ordered locus">WP1120</name>
</gene>
<reference key="1">
    <citation type="journal article" date="2008" name="Mol. Biol. Evol.">
        <title>Genome evolution of Wolbachia strain wPip from the Culex pipiens group.</title>
        <authorList>
            <person name="Klasson L."/>
            <person name="Walker T."/>
            <person name="Sebaihia M."/>
            <person name="Sanders M.J."/>
            <person name="Quail M.A."/>
            <person name="Lord A."/>
            <person name="Sanders S."/>
            <person name="Earl J."/>
            <person name="O'Neill S.L."/>
            <person name="Thomson N."/>
            <person name="Sinkins S.P."/>
            <person name="Parkhill J."/>
        </authorList>
    </citation>
    <scope>NUCLEOTIDE SEQUENCE [LARGE SCALE GENOMIC DNA]</scope>
    <source>
        <strain>wPip</strain>
    </source>
</reference>
<name>UVRC_WOLPP</name>
<proteinExistence type="inferred from homology"/>
<comment type="function">
    <text evidence="1">The UvrABC repair system catalyzes the recognition and processing of DNA lesions. UvrC both incises the 5' and 3' sides of the lesion. The N-terminal half is responsible for the 3' incision and the C-terminal half is responsible for the 5' incision.</text>
</comment>
<comment type="subunit">
    <text evidence="1">Interacts with UvrB in an incision complex.</text>
</comment>
<comment type="subcellular location">
    <subcellularLocation>
        <location evidence="1">Cytoplasm</location>
    </subcellularLocation>
</comment>
<comment type="similarity">
    <text evidence="1">Belongs to the UvrC family.</text>
</comment>
<keyword id="KW-0963">Cytoplasm</keyword>
<keyword id="KW-0227">DNA damage</keyword>
<keyword id="KW-0228">DNA excision</keyword>
<keyword id="KW-0234">DNA repair</keyword>
<keyword id="KW-0267">Excision nuclease</keyword>
<keyword id="KW-0742">SOS response</keyword>
<organism>
    <name type="scientific">Wolbachia pipientis subsp. Culex pipiens (strain wPip)</name>
    <dbReference type="NCBI Taxonomy" id="570417"/>
    <lineage>
        <taxon>Bacteria</taxon>
        <taxon>Pseudomonadati</taxon>
        <taxon>Pseudomonadota</taxon>
        <taxon>Alphaproteobacteria</taxon>
        <taxon>Rickettsiales</taxon>
        <taxon>Anaplasmataceae</taxon>
        <taxon>Wolbachieae</taxon>
        <taxon>Wolbachia</taxon>
    </lineage>
</organism>
<sequence>MLRQYKEQIKSSPQSCGVYKMIGDKSKVLYIGKAKNLKSRLSDYLQFENLSERIRVMISQVIKVEIFITENEIEALLLEAQLIKSLKPSYNILLRDGKSYPYITISKHDYPRIAKYRGKFKKNEFHYYGPFPSAAAVKNTILSLQKAFLLRVCSDQYFSSTKRPCLEYQVKRCSAPCVDKITKDDYCKSVKQAQDTLLGRNKEVQRQLFSTMEKCSREMNYELAAVYRDRLKFLQQIQMQPMDFSFEEDADFFSVVREADLACIGVLSFRDKGNYGSIPYFIENCSDHSNDEILSTFLVNLYNPVNTPPAQIYVPDFIKDKEIIEQALYALTQKSIKVLHAKNSKERDLLNFIYNNSQHSLEQKLTDYRNNLEKLEELRKIFSLPNIPKRIEVYDNSHISGNQQVGVMIVAGQEGFLKSEYKKFTIKEEISGDDYKMMREVLTRRFSGNIKDIIPDFLLIDGGPGHVSIVQNVLEILNIKVPFACMAKGHDRNAGNERFYVPDREEFTLASDSKVMLYLQLLRNEAHRFAITSHRKKRDKQFFASQLSEISGVGSKRKKALMSHFGSVENISKASLAEIQNVPGISKGLAEIILQHVNSKKGTPK</sequence>
<accession>B3CMV5</accession>
<feature type="chain" id="PRO_1000099534" description="UvrABC system protein C">
    <location>
        <begin position="1"/>
        <end position="605"/>
    </location>
</feature>
<feature type="domain" description="GIY-YIG" evidence="1">
    <location>
        <begin position="14"/>
        <end position="92"/>
    </location>
</feature>
<feature type="domain" description="UVR" evidence="1">
    <location>
        <begin position="202"/>
        <end position="237"/>
    </location>
</feature>
<evidence type="ECO:0000255" key="1">
    <source>
        <dbReference type="HAMAP-Rule" id="MF_00203"/>
    </source>
</evidence>